<proteinExistence type="inferred from homology"/>
<comment type="function">
    <text evidence="2">Catalyzes the formation of N(7)-methylguanine at position 46 (m7G46) in tRNA.</text>
</comment>
<comment type="catalytic activity">
    <reaction evidence="2">
        <text>guanosine(46) in tRNA + S-adenosyl-L-methionine = N(7)-methylguanosine(46) in tRNA + S-adenosyl-L-homocysteine</text>
        <dbReference type="Rhea" id="RHEA:42708"/>
        <dbReference type="Rhea" id="RHEA-COMP:10188"/>
        <dbReference type="Rhea" id="RHEA-COMP:10189"/>
        <dbReference type="ChEBI" id="CHEBI:57856"/>
        <dbReference type="ChEBI" id="CHEBI:59789"/>
        <dbReference type="ChEBI" id="CHEBI:74269"/>
        <dbReference type="ChEBI" id="CHEBI:74480"/>
        <dbReference type="EC" id="2.1.1.33"/>
    </reaction>
</comment>
<comment type="pathway">
    <text evidence="2">tRNA modification; N(7)-methylguanine-tRNA biosynthesis.</text>
</comment>
<comment type="similarity">
    <text evidence="2">Belongs to the class I-like SAM-binding methyltransferase superfamily. TrmB family.</text>
</comment>
<accession>B1IA75</accession>
<evidence type="ECO:0000250" key="1"/>
<evidence type="ECO:0000255" key="2">
    <source>
        <dbReference type="HAMAP-Rule" id="MF_01057"/>
    </source>
</evidence>
<protein>
    <recommendedName>
        <fullName evidence="2">tRNA (guanine-N(7)-)-methyltransferase</fullName>
        <ecNumber evidence="2">2.1.1.33</ecNumber>
    </recommendedName>
    <alternativeName>
        <fullName evidence="2">tRNA (guanine(46)-N(7))-methyltransferase</fullName>
    </alternativeName>
    <alternativeName>
        <fullName evidence="2">tRNA(m7G46)-methyltransferase</fullName>
    </alternativeName>
</protein>
<name>TRMB_STRPI</name>
<keyword id="KW-0489">Methyltransferase</keyword>
<keyword id="KW-0949">S-adenosyl-L-methionine</keyword>
<keyword id="KW-0808">Transferase</keyword>
<keyword id="KW-0819">tRNA processing</keyword>
<gene>
    <name evidence="2" type="primary">trmB</name>
    <name type="ordered locus">SPH_0648</name>
</gene>
<dbReference type="EC" id="2.1.1.33" evidence="2"/>
<dbReference type="EMBL" id="CP000936">
    <property type="protein sequence ID" value="ACA37022.1"/>
    <property type="molecule type" value="Genomic_DNA"/>
</dbReference>
<dbReference type="RefSeq" id="WP_001266083.1">
    <property type="nucleotide sequence ID" value="NC_010380.1"/>
</dbReference>
<dbReference type="SMR" id="B1IA75"/>
<dbReference type="GeneID" id="45654031"/>
<dbReference type="KEGG" id="spv:SPH_0648"/>
<dbReference type="HOGENOM" id="CLU_050910_2_1_9"/>
<dbReference type="UniPathway" id="UPA00989"/>
<dbReference type="Proteomes" id="UP000002163">
    <property type="component" value="Chromosome"/>
</dbReference>
<dbReference type="GO" id="GO:0043527">
    <property type="term" value="C:tRNA methyltransferase complex"/>
    <property type="evidence" value="ECO:0007669"/>
    <property type="project" value="TreeGrafter"/>
</dbReference>
<dbReference type="GO" id="GO:0008176">
    <property type="term" value="F:tRNA (guanine(46)-N7)-methyltransferase activity"/>
    <property type="evidence" value="ECO:0007669"/>
    <property type="project" value="UniProtKB-UniRule"/>
</dbReference>
<dbReference type="CDD" id="cd02440">
    <property type="entry name" value="AdoMet_MTases"/>
    <property type="match status" value="1"/>
</dbReference>
<dbReference type="FunFam" id="3.40.50.150:FF:000035">
    <property type="entry name" value="tRNA (guanine-N(7)-)-methyltransferase"/>
    <property type="match status" value="1"/>
</dbReference>
<dbReference type="Gene3D" id="3.40.50.150">
    <property type="entry name" value="Vaccinia Virus protein VP39"/>
    <property type="match status" value="1"/>
</dbReference>
<dbReference type="HAMAP" id="MF_01057">
    <property type="entry name" value="tRNA_methyltr_TrmB"/>
    <property type="match status" value="1"/>
</dbReference>
<dbReference type="InterPro" id="IPR029063">
    <property type="entry name" value="SAM-dependent_MTases_sf"/>
</dbReference>
<dbReference type="InterPro" id="IPR003358">
    <property type="entry name" value="tRNA_(Gua-N-7)_MeTrfase_Trmb"/>
</dbReference>
<dbReference type="InterPro" id="IPR055361">
    <property type="entry name" value="tRNA_methyltr_TrmB_bact"/>
</dbReference>
<dbReference type="NCBIfam" id="NF001080">
    <property type="entry name" value="PRK00121.2-2"/>
    <property type="match status" value="1"/>
</dbReference>
<dbReference type="NCBIfam" id="TIGR00091">
    <property type="entry name" value="tRNA (guanosine(46)-N7)-methyltransferase TrmB"/>
    <property type="match status" value="1"/>
</dbReference>
<dbReference type="PANTHER" id="PTHR23417">
    <property type="entry name" value="3-DEOXY-D-MANNO-OCTULOSONIC-ACID TRANSFERASE/TRNA GUANINE-N 7 - -METHYLTRANSFERASE"/>
    <property type="match status" value="1"/>
</dbReference>
<dbReference type="PANTHER" id="PTHR23417:SF14">
    <property type="entry name" value="PENTACOTRIPEPTIDE-REPEAT REGION OF PRORP DOMAIN-CONTAINING PROTEIN"/>
    <property type="match status" value="1"/>
</dbReference>
<dbReference type="Pfam" id="PF02390">
    <property type="entry name" value="Methyltransf_4"/>
    <property type="match status" value="1"/>
</dbReference>
<dbReference type="SUPFAM" id="SSF53335">
    <property type="entry name" value="S-adenosyl-L-methionine-dependent methyltransferases"/>
    <property type="match status" value="1"/>
</dbReference>
<dbReference type="PROSITE" id="PS51625">
    <property type="entry name" value="SAM_MT_TRMB"/>
    <property type="match status" value="1"/>
</dbReference>
<feature type="chain" id="PRO_1000136370" description="tRNA (guanine-N(7)-)-methyltransferase">
    <location>
        <begin position="1"/>
        <end position="211"/>
    </location>
</feature>
<feature type="region of interest" description="Interaction with RNA" evidence="2">
    <location>
        <begin position="124"/>
        <end position="129"/>
    </location>
</feature>
<feature type="active site" evidence="1">
    <location>
        <position position="118"/>
    </location>
</feature>
<feature type="binding site" evidence="2">
    <location>
        <position position="44"/>
    </location>
    <ligand>
        <name>S-adenosyl-L-methionine</name>
        <dbReference type="ChEBI" id="CHEBI:59789"/>
    </ligand>
</feature>
<feature type="binding site" evidence="2">
    <location>
        <position position="69"/>
    </location>
    <ligand>
        <name>S-adenosyl-L-methionine</name>
        <dbReference type="ChEBI" id="CHEBI:59789"/>
    </ligand>
</feature>
<feature type="binding site" evidence="2">
    <location>
        <position position="96"/>
    </location>
    <ligand>
        <name>S-adenosyl-L-methionine</name>
        <dbReference type="ChEBI" id="CHEBI:59789"/>
    </ligand>
</feature>
<feature type="binding site" evidence="2">
    <location>
        <position position="118"/>
    </location>
    <ligand>
        <name>S-adenosyl-L-methionine</name>
        <dbReference type="ChEBI" id="CHEBI:59789"/>
    </ligand>
</feature>
<feature type="binding site" evidence="2">
    <location>
        <position position="122"/>
    </location>
    <ligand>
        <name>substrate</name>
    </ligand>
</feature>
<feature type="binding site" evidence="2">
    <location>
        <position position="154"/>
    </location>
    <ligand>
        <name>substrate</name>
    </ligand>
</feature>
<feature type="binding site" evidence="2">
    <location>
        <begin position="191"/>
        <end position="194"/>
    </location>
    <ligand>
        <name>substrate</name>
    </ligand>
</feature>
<organism>
    <name type="scientific">Streptococcus pneumoniae (strain Hungary19A-6)</name>
    <dbReference type="NCBI Taxonomy" id="487214"/>
    <lineage>
        <taxon>Bacteria</taxon>
        <taxon>Bacillati</taxon>
        <taxon>Bacillota</taxon>
        <taxon>Bacilli</taxon>
        <taxon>Lactobacillales</taxon>
        <taxon>Streptococcaceae</taxon>
        <taxon>Streptococcus</taxon>
    </lineage>
</organism>
<sequence>MRVRNRKGATELLEANPQYVVLNPLEAKAKWRDLFGNDNPIHVEVGSGKGAFVSGMAKQNPDINYIGIDIQKSVLSYALDKVLEVGVPNIKLLWVDGSDLTDYFEDGEIDRLYLNFSDPWPKKRHEKRRLTYKTFLDTFKRILPENGEIHFKTDNRGLFEYSLVSFSQYGMKLNGVWLDLHASDFEGNVMTEYEQKFSNKGQVIYRVEAEF</sequence>
<reference key="1">
    <citation type="journal article" date="2010" name="Genome Biol.">
        <title>Structure and dynamics of the pan-genome of Streptococcus pneumoniae and closely related species.</title>
        <authorList>
            <person name="Donati C."/>
            <person name="Hiller N.L."/>
            <person name="Tettelin H."/>
            <person name="Muzzi A."/>
            <person name="Croucher N.J."/>
            <person name="Angiuoli S.V."/>
            <person name="Oggioni M."/>
            <person name="Dunning Hotopp J.C."/>
            <person name="Hu F.Z."/>
            <person name="Riley D.R."/>
            <person name="Covacci A."/>
            <person name="Mitchell T.J."/>
            <person name="Bentley S.D."/>
            <person name="Kilian M."/>
            <person name="Ehrlich G.D."/>
            <person name="Rappuoli R."/>
            <person name="Moxon E.R."/>
            <person name="Masignani V."/>
        </authorList>
    </citation>
    <scope>NUCLEOTIDE SEQUENCE [LARGE SCALE GENOMIC DNA]</scope>
    <source>
        <strain>Hungary19A-6</strain>
    </source>
</reference>